<gene>
    <name type="primary">norM</name>
    <name type="ordered locus">PP_5262</name>
</gene>
<feature type="chain" id="PRO_0000164233" description="Probable multidrug resistance protein NorM">
    <location>
        <begin position="1"/>
        <end position="462"/>
    </location>
</feature>
<feature type="transmembrane region" description="Helical" evidence="2">
    <location>
        <begin position="12"/>
        <end position="31"/>
    </location>
</feature>
<feature type="transmembrane region" description="Helical" evidence="2">
    <location>
        <begin position="51"/>
        <end position="73"/>
    </location>
</feature>
<feature type="transmembrane region" description="Helical" evidence="2">
    <location>
        <begin position="93"/>
        <end position="115"/>
    </location>
</feature>
<feature type="transmembrane region" description="Helical" evidence="2">
    <location>
        <begin position="125"/>
        <end position="147"/>
    </location>
</feature>
<feature type="transmembrane region" description="Helical" evidence="2">
    <location>
        <begin position="160"/>
        <end position="179"/>
    </location>
</feature>
<feature type="transmembrane region" description="Helical" evidence="2">
    <location>
        <begin position="189"/>
        <end position="211"/>
    </location>
</feature>
<feature type="transmembrane region" description="Helical" evidence="2">
    <location>
        <begin position="238"/>
        <end position="260"/>
    </location>
</feature>
<feature type="transmembrane region" description="Helical" evidence="2">
    <location>
        <begin position="275"/>
        <end position="297"/>
    </location>
</feature>
<feature type="transmembrane region" description="Helical" evidence="2">
    <location>
        <begin position="318"/>
        <end position="340"/>
    </location>
</feature>
<feature type="transmembrane region" description="Helical" evidence="2">
    <location>
        <begin position="350"/>
        <end position="372"/>
    </location>
</feature>
<feature type="transmembrane region" description="Helical" evidence="2">
    <location>
        <begin position="393"/>
        <end position="415"/>
    </location>
</feature>
<feature type="transmembrane region" description="Helical" evidence="2">
    <location>
        <begin position="419"/>
        <end position="441"/>
    </location>
</feature>
<sequence length="462" mass="48856">MHVAPTTELKALLRLAGPLIASQLAHMLMVLTDTLMMARISPQALAGGGLGAASYSFVSIFCLGVIAAVGTLVAIRKGANDIEGATRLAQNGLWLAWALALFAALVLWNLEPVLLLFGQKPENVASAAEFLTLLPLALPGYLTFMALRGFTSALGRSTPVMVISLFGTVLNYLFNVALIEGMFGLPKLGLMGIGLVTAVVSMGMATALALYIRWHPAYTAYPLRKGLSRPSLAALRELWRLGLPIGGTYMVEVGLFAFAALCMGVLGSTELAAHQIALQIVSTAFMVPTGLSYAVTMRVGLYYGAGNLLAARSAGRVGIGFGAMIMFAFATLFLLLPEALVGLFIDRNDPAFAAIFQVAVQLLMVAAWFELFDGMQTIAMGSIRGLKDAKTTFLIGLVCYWLVGAPSAWLFTFTLGGGAVGIWWGLALGLACAAVALTFGFEWRMKRLLGKAGVRTEAAVSA</sequence>
<evidence type="ECO:0000250" key="1"/>
<evidence type="ECO:0000255" key="2"/>
<evidence type="ECO:0000305" key="3"/>
<reference key="1">
    <citation type="journal article" date="2002" name="Environ. Microbiol.">
        <title>Complete genome sequence and comparative analysis of the metabolically versatile Pseudomonas putida KT2440.</title>
        <authorList>
            <person name="Nelson K.E."/>
            <person name="Weinel C."/>
            <person name="Paulsen I.T."/>
            <person name="Dodson R.J."/>
            <person name="Hilbert H."/>
            <person name="Martins dos Santos V.A.P."/>
            <person name="Fouts D.E."/>
            <person name="Gill S.R."/>
            <person name="Pop M."/>
            <person name="Holmes M."/>
            <person name="Brinkac L.M."/>
            <person name="Beanan M.J."/>
            <person name="DeBoy R.T."/>
            <person name="Daugherty S.C."/>
            <person name="Kolonay J.F."/>
            <person name="Madupu R."/>
            <person name="Nelson W.C."/>
            <person name="White O."/>
            <person name="Peterson J.D."/>
            <person name="Khouri H.M."/>
            <person name="Hance I."/>
            <person name="Chris Lee P."/>
            <person name="Holtzapple E.K."/>
            <person name="Scanlan D."/>
            <person name="Tran K."/>
            <person name="Moazzez A."/>
            <person name="Utterback T.R."/>
            <person name="Rizzo M."/>
            <person name="Lee K."/>
            <person name="Kosack D."/>
            <person name="Moestl D."/>
            <person name="Wedler H."/>
            <person name="Lauber J."/>
            <person name="Stjepandic D."/>
            <person name="Hoheisel J."/>
            <person name="Straetz M."/>
            <person name="Heim S."/>
            <person name="Kiewitz C."/>
            <person name="Eisen J.A."/>
            <person name="Timmis K.N."/>
            <person name="Duesterhoeft A."/>
            <person name="Tuemmler B."/>
            <person name="Fraser C.M."/>
        </authorList>
    </citation>
    <scope>NUCLEOTIDE SEQUENCE [LARGE SCALE GENOMIC DNA]</scope>
    <source>
        <strain>ATCC 47054 / DSM 6125 / CFBP 8728 / NCIMB 11950 / KT2440</strain>
    </source>
</reference>
<accession>Q88CB9</accession>
<protein>
    <recommendedName>
        <fullName>Probable multidrug resistance protein NorM</fullName>
    </recommendedName>
    <alternativeName>
        <fullName>Multidrug-efflux transporter</fullName>
    </alternativeName>
</protein>
<name>NORM_PSEPK</name>
<organism>
    <name type="scientific">Pseudomonas putida (strain ATCC 47054 / DSM 6125 / CFBP 8728 / NCIMB 11950 / KT2440)</name>
    <dbReference type="NCBI Taxonomy" id="160488"/>
    <lineage>
        <taxon>Bacteria</taxon>
        <taxon>Pseudomonadati</taxon>
        <taxon>Pseudomonadota</taxon>
        <taxon>Gammaproteobacteria</taxon>
        <taxon>Pseudomonadales</taxon>
        <taxon>Pseudomonadaceae</taxon>
        <taxon>Pseudomonas</taxon>
    </lineage>
</organism>
<dbReference type="EMBL" id="AE015451">
    <property type="protein sequence ID" value="AAN70827.1"/>
    <property type="molecule type" value="Genomic_DNA"/>
</dbReference>
<dbReference type="RefSeq" id="NP_747363.1">
    <property type="nucleotide sequence ID" value="NC_002947.4"/>
</dbReference>
<dbReference type="RefSeq" id="WP_010955775.1">
    <property type="nucleotide sequence ID" value="NZ_CP169744.1"/>
</dbReference>
<dbReference type="SMR" id="Q88CB9"/>
<dbReference type="STRING" id="160488.PP_5262"/>
<dbReference type="PaxDb" id="160488-PP_5262"/>
<dbReference type="KEGG" id="ppu:PP_5262"/>
<dbReference type="PATRIC" id="fig|160488.4.peg.5614"/>
<dbReference type="eggNOG" id="COG0534">
    <property type="taxonomic scope" value="Bacteria"/>
</dbReference>
<dbReference type="HOGENOM" id="CLU_012893_6_3_6"/>
<dbReference type="OrthoDB" id="9780160at2"/>
<dbReference type="PhylomeDB" id="Q88CB9"/>
<dbReference type="BioCyc" id="PPUT160488:G1G01-5619-MONOMER"/>
<dbReference type="Proteomes" id="UP000000556">
    <property type="component" value="Chromosome"/>
</dbReference>
<dbReference type="GO" id="GO:0005886">
    <property type="term" value="C:plasma membrane"/>
    <property type="evidence" value="ECO:0007669"/>
    <property type="project" value="UniProtKB-SubCell"/>
</dbReference>
<dbReference type="GO" id="GO:0015297">
    <property type="term" value="F:antiporter activity"/>
    <property type="evidence" value="ECO:0007669"/>
    <property type="project" value="UniProtKB-KW"/>
</dbReference>
<dbReference type="GO" id="GO:0042910">
    <property type="term" value="F:xenobiotic transmembrane transporter activity"/>
    <property type="evidence" value="ECO:0007669"/>
    <property type="project" value="InterPro"/>
</dbReference>
<dbReference type="GO" id="GO:0006811">
    <property type="term" value="P:monoatomic ion transport"/>
    <property type="evidence" value="ECO:0007669"/>
    <property type="project" value="UniProtKB-KW"/>
</dbReference>
<dbReference type="CDD" id="cd13131">
    <property type="entry name" value="MATE_NorM_like"/>
    <property type="match status" value="1"/>
</dbReference>
<dbReference type="InterPro" id="IPR002528">
    <property type="entry name" value="MATE_fam"/>
</dbReference>
<dbReference type="InterPro" id="IPR050222">
    <property type="entry name" value="MATE_MdtK"/>
</dbReference>
<dbReference type="InterPro" id="IPR048279">
    <property type="entry name" value="MdtK-like"/>
</dbReference>
<dbReference type="NCBIfam" id="TIGR00797">
    <property type="entry name" value="matE"/>
    <property type="match status" value="1"/>
</dbReference>
<dbReference type="NCBIfam" id="NF001214">
    <property type="entry name" value="PRK00187.1"/>
    <property type="match status" value="1"/>
</dbReference>
<dbReference type="PANTHER" id="PTHR43298:SF2">
    <property type="entry name" value="FMN_FAD EXPORTER YEEO-RELATED"/>
    <property type="match status" value="1"/>
</dbReference>
<dbReference type="PANTHER" id="PTHR43298">
    <property type="entry name" value="MULTIDRUG RESISTANCE PROTEIN NORM-RELATED"/>
    <property type="match status" value="1"/>
</dbReference>
<dbReference type="Pfam" id="PF01554">
    <property type="entry name" value="MatE"/>
    <property type="match status" value="2"/>
</dbReference>
<dbReference type="PIRSF" id="PIRSF006603">
    <property type="entry name" value="DinF"/>
    <property type="match status" value="1"/>
</dbReference>
<proteinExistence type="inferred from homology"/>
<comment type="function">
    <text evidence="1">Multidrug efflux pump.</text>
</comment>
<comment type="subcellular location">
    <subcellularLocation>
        <location evidence="1">Cell inner membrane</location>
        <topology evidence="1">Multi-pass membrane protein</topology>
    </subcellularLocation>
</comment>
<comment type="similarity">
    <text evidence="3">Belongs to the multi antimicrobial extrusion (MATE) (TC 2.A.66.1) family.</text>
</comment>
<keyword id="KW-0050">Antiport</keyword>
<keyword id="KW-0997">Cell inner membrane</keyword>
<keyword id="KW-1003">Cell membrane</keyword>
<keyword id="KW-0406">Ion transport</keyword>
<keyword id="KW-0472">Membrane</keyword>
<keyword id="KW-1185">Reference proteome</keyword>
<keyword id="KW-0812">Transmembrane</keyword>
<keyword id="KW-1133">Transmembrane helix</keyword>
<keyword id="KW-0813">Transport</keyword>